<organism>
    <name type="scientific">Halalkalibacterium halodurans (strain ATCC BAA-125 / DSM 18197 / FERM 7344 / JCM 9153 / C-125)</name>
    <name type="common">Bacillus halodurans</name>
    <dbReference type="NCBI Taxonomy" id="272558"/>
    <lineage>
        <taxon>Bacteria</taxon>
        <taxon>Bacillati</taxon>
        <taxon>Bacillota</taxon>
        <taxon>Bacilli</taxon>
        <taxon>Bacillales</taxon>
        <taxon>Bacillaceae</taxon>
        <taxon>Halalkalibacterium (ex Joshi et al. 2022)</taxon>
    </lineage>
</organism>
<reference key="1">
    <citation type="journal article" date="2000" name="Nucleic Acids Res.">
        <title>Complete genome sequence of the alkaliphilic bacterium Bacillus halodurans and genomic sequence comparison with Bacillus subtilis.</title>
        <authorList>
            <person name="Takami H."/>
            <person name="Nakasone K."/>
            <person name="Takaki Y."/>
            <person name="Maeno G."/>
            <person name="Sasaki R."/>
            <person name="Masui N."/>
            <person name="Fuji F."/>
            <person name="Hirama C."/>
            <person name="Nakamura Y."/>
            <person name="Ogasawara N."/>
            <person name="Kuhara S."/>
            <person name="Horikoshi K."/>
        </authorList>
    </citation>
    <scope>NUCLEOTIDE SEQUENCE [LARGE SCALE GENOMIC DNA]</scope>
    <source>
        <strain>ATCC BAA-125 / DSM 18197 / FERM 7344 / JCM 9153 / C-125</strain>
    </source>
</reference>
<reference evidence="6" key="2">
    <citation type="submission" date="2006-11" db="PDB data bank">
        <title>Crystal structure of hypothetical protein (NP_242193.1) from Bacillus halodurans at 1.90 A resolution.</title>
        <authorList>
            <consortium name="Joint center for structural genomics (JCSG)"/>
        </authorList>
    </citation>
    <scope>X-RAY CRYSTALLOGRAPHY (1.90 ANGSTROMS) IN COMPLEX WITH IRON AND DGDP</scope>
</reference>
<protein>
    <recommendedName>
        <fullName evidence="1">Bis(5'-nucleosyl)-tetraphosphatase, symmetrical</fullName>
        <ecNumber evidence="1">3.6.1.41</ecNumber>
    </recommendedName>
    <alternativeName>
        <fullName evidence="1">Ap4A hydrolase</fullName>
    </alternativeName>
</protein>
<dbReference type="EC" id="3.6.1.41" evidence="1"/>
<dbReference type="EMBL" id="BA000004">
    <property type="protein sequence ID" value="BAB05046.1"/>
    <property type="molecule type" value="Genomic_DNA"/>
</dbReference>
<dbReference type="PIR" id="G83815">
    <property type="entry name" value="G83815"/>
</dbReference>
<dbReference type="RefSeq" id="WP_010897494.1">
    <property type="nucleotide sequence ID" value="NC_002570.2"/>
</dbReference>
<dbReference type="PDB" id="2O08">
    <property type="method" value="X-ray"/>
    <property type="resolution" value="1.90 A"/>
    <property type="chains" value="A/B=1-187"/>
</dbReference>
<dbReference type="PDBsum" id="2O08"/>
<dbReference type="SMR" id="Q9KD90"/>
<dbReference type="STRING" id="272558.gene:10727221"/>
<dbReference type="GeneID" id="87596949"/>
<dbReference type="KEGG" id="bha:BH1327"/>
<dbReference type="eggNOG" id="COG1713">
    <property type="taxonomic scope" value="Bacteria"/>
</dbReference>
<dbReference type="HOGENOM" id="CLU_089580_1_2_9"/>
<dbReference type="OrthoDB" id="9782134at2"/>
<dbReference type="EvolutionaryTrace" id="Q9KD90"/>
<dbReference type="Proteomes" id="UP000001258">
    <property type="component" value="Chromosome"/>
</dbReference>
<dbReference type="GO" id="GO:0016787">
    <property type="term" value="F:hydrolase activity"/>
    <property type="evidence" value="ECO:0007669"/>
    <property type="project" value="UniProtKB-KW"/>
</dbReference>
<dbReference type="GO" id="GO:0046872">
    <property type="term" value="F:metal ion binding"/>
    <property type="evidence" value="ECO:0007669"/>
    <property type="project" value="UniProtKB-KW"/>
</dbReference>
<dbReference type="GO" id="GO:0000166">
    <property type="term" value="F:nucleotide binding"/>
    <property type="evidence" value="ECO:0007669"/>
    <property type="project" value="UniProtKB-KW"/>
</dbReference>
<dbReference type="CDD" id="cd00077">
    <property type="entry name" value="HDc"/>
    <property type="match status" value="1"/>
</dbReference>
<dbReference type="Gene3D" id="1.10.3210.10">
    <property type="entry name" value="Hypothetical protein af1432"/>
    <property type="match status" value="1"/>
</dbReference>
<dbReference type="InterPro" id="IPR051094">
    <property type="entry name" value="Diverse_Catalytic_Enzymes"/>
</dbReference>
<dbReference type="InterPro" id="IPR003607">
    <property type="entry name" value="HD/PDEase_dom"/>
</dbReference>
<dbReference type="InterPro" id="IPR006674">
    <property type="entry name" value="HD_domain"/>
</dbReference>
<dbReference type="InterPro" id="IPR005249">
    <property type="entry name" value="YqeK"/>
</dbReference>
<dbReference type="NCBIfam" id="TIGR00488">
    <property type="entry name" value="bis(5'-nucleosyl)-tetraphosphatase (symmetrical) YqeK"/>
    <property type="match status" value="1"/>
</dbReference>
<dbReference type="PANTHER" id="PTHR35795:SF1">
    <property type="entry name" value="BIS(5'-NUCLEOSYL)-TETRAPHOSPHATASE, SYMMETRICAL"/>
    <property type="match status" value="1"/>
</dbReference>
<dbReference type="PANTHER" id="PTHR35795">
    <property type="entry name" value="SLR1885 PROTEIN"/>
    <property type="match status" value="1"/>
</dbReference>
<dbReference type="Pfam" id="PF01966">
    <property type="entry name" value="HD"/>
    <property type="match status" value="1"/>
</dbReference>
<dbReference type="SMART" id="SM00471">
    <property type="entry name" value="HDc"/>
    <property type="match status" value="1"/>
</dbReference>
<dbReference type="SUPFAM" id="SSF109604">
    <property type="entry name" value="HD-domain/PDEase-like"/>
    <property type="match status" value="1"/>
</dbReference>
<dbReference type="PROSITE" id="PS51831">
    <property type="entry name" value="HD"/>
    <property type="match status" value="1"/>
</dbReference>
<evidence type="ECO:0000250" key="1">
    <source>
        <dbReference type="UniProtKB" id="Q2G297"/>
    </source>
</evidence>
<evidence type="ECO:0000255" key="2">
    <source>
        <dbReference type="PROSITE-ProRule" id="PRU01175"/>
    </source>
</evidence>
<evidence type="ECO:0000305" key="3"/>
<evidence type="ECO:0000305" key="4">
    <source ref="2"/>
</evidence>
<evidence type="ECO:0000312" key="5">
    <source>
        <dbReference type="EMBL" id="BAB05046.1"/>
    </source>
</evidence>
<evidence type="ECO:0007744" key="6">
    <source>
        <dbReference type="PDB" id="2O08"/>
    </source>
</evidence>
<evidence type="ECO:0007829" key="7">
    <source>
        <dbReference type="PDB" id="2O08"/>
    </source>
</evidence>
<feature type="chain" id="PRO_0000454777" description="Bis(5'-nucleosyl)-tetraphosphatase, symmetrical">
    <location>
        <begin position="1"/>
        <end position="187"/>
    </location>
</feature>
<feature type="domain" description="HD" evidence="2">
    <location>
        <begin position="18"/>
        <end position="132"/>
    </location>
</feature>
<feature type="binding site" evidence="4">
    <location>
        <position position="21"/>
    </location>
    <ligand>
        <name>ADP</name>
        <dbReference type="ChEBI" id="CHEBI:456216"/>
    </ligand>
</feature>
<feature type="binding site" evidence="6">
    <location>
        <position position="21"/>
    </location>
    <ligand>
        <name>Fe cation</name>
        <dbReference type="ChEBI" id="CHEBI:24875"/>
    </ligand>
</feature>
<feature type="binding site" evidence="6">
    <location>
        <position position="50"/>
    </location>
    <ligand>
        <name>Fe cation</name>
        <dbReference type="ChEBI" id="CHEBI:24875"/>
    </ligand>
</feature>
<feature type="binding site" evidence="4">
    <location>
        <begin position="51"/>
        <end position="54"/>
    </location>
    <ligand>
        <name>ADP</name>
        <dbReference type="ChEBI" id="CHEBI:456216"/>
    </ligand>
</feature>
<feature type="binding site" evidence="6">
    <location>
        <position position="51"/>
    </location>
    <ligand>
        <name>Fe cation</name>
        <dbReference type="ChEBI" id="CHEBI:24875"/>
    </ligand>
</feature>
<feature type="binding site" evidence="4">
    <location>
        <position position="83"/>
    </location>
    <ligand>
        <name>ADP</name>
        <dbReference type="ChEBI" id="CHEBI:456216"/>
    </ligand>
</feature>
<feature type="binding site" evidence="4">
    <location>
        <begin position="109"/>
        <end position="110"/>
    </location>
    <ligand>
        <name>ADP</name>
        <dbReference type="ChEBI" id="CHEBI:456216"/>
    </ligand>
</feature>
<feature type="binding site" evidence="4">
    <location>
        <position position="127"/>
    </location>
    <ligand>
        <name>ADP</name>
        <dbReference type="ChEBI" id="CHEBI:456216"/>
    </ligand>
</feature>
<feature type="binding site" evidence="6">
    <location>
        <position position="127"/>
    </location>
    <ligand>
        <name>Fe cation</name>
        <dbReference type="ChEBI" id="CHEBI:24875"/>
    </ligand>
</feature>
<feature type="binding site" evidence="4">
    <location>
        <position position="133"/>
    </location>
    <ligand>
        <name>ADP</name>
        <dbReference type="ChEBI" id="CHEBI:456216"/>
    </ligand>
</feature>
<feature type="binding site" evidence="4">
    <location>
        <begin position="170"/>
        <end position="175"/>
    </location>
    <ligand>
        <name>ADP</name>
        <dbReference type="ChEBI" id="CHEBI:456216"/>
    </ligand>
</feature>
<feature type="helix" evidence="7">
    <location>
        <begin position="3"/>
        <end position="10"/>
    </location>
</feature>
<feature type="helix" evidence="7">
    <location>
        <begin position="11"/>
        <end position="13"/>
    </location>
</feature>
<feature type="helix" evidence="7">
    <location>
        <begin position="16"/>
        <end position="36"/>
    </location>
</feature>
<feature type="helix" evidence="7">
    <location>
        <begin position="40"/>
        <end position="49"/>
    </location>
</feature>
<feature type="turn" evidence="7">
    <location>
        <begin position="50"/>
        <end position="55"/>
    </location>
</feature>
<feature type="helix" evidence="7">
    <location>
        <begin position="58"/>
        <end position="68"/>
    </location>
</feature>
<feature type="helix" evidence="7">
    <location>
        <begin position="73"/>
        <end position="76"/>
    </location>
</feature>
<feature type="helix" evidence="7">
    <location>
        <begin position="79"/>
        <end position="81"/>
    </location>
</feature>
<feature type="helix" evidence="7">
    <location>
        <begin position="83"/>
        <end position="93"/>
    </location>
</feature>
<feature type="helix" evidence="7">
    <location>
        <begin position="100"/>
        <end position="107"/>
    </location>
</feature>
<feature type="turn" evidence="7">
    <location>
        <begin position="108"/>
        <end position="111"/>
    </location>
</feature>
<feature type="helix" evidence="7">
    <location>
        <begin position="118"/>
        <end position="129"/>
    </location>
</feature>
<feature type="helix" evidence="7">
    <location>
        <begin position="138"/>
        <end position="145"/>
    </location>
</feature>
<feature type="helix" evidence="7">
    <location>
        <begin position="149"/>
        <end position="166"/>
    </location>
</feature>
<feature type="helix" evidence="7">
    <location>
        <begin position="173"/>
        <end position="185"/>
    </location>
</feature>
<sequence length="187" mass="21521">MNRGKALQLVKPHLTEHRYQHTIGVMETAIDLAKLYGADQQKAELAAIFHDYAKFRDKNEMRTLIREKLSQQDILFYGDELLHAPCGAYYVREEVGIEDEDVLQAIRFHTTGRPNMSLLEKIIFLADYIEPNRQFPGVEKVRTQAKTDLNGAIISSLVNTITFLLKKNQPIYPDTLATYNQLLLEQK</sequence>
<comment type="function">
    <text evidence="1">Hydrolyzes diadenosine 5',5'''-P1,P4-tetraphosphate (Ap4A) to yield ADP.</text>
</comment>
<comment type="catalytic activity">
    <reaction evidence="1">
        <text>P(1),P(4)-bis(5'-adenosyl) tetraphosphate + H2O = 2 ADP + 2 H(+)</text>
        <dbReference type="Rhea" id="RHEA:24252"/>
        <dbReference type="ChEBI" id="CHEBI:15377"/>
        <dbReference type="ChEBI" id="CHEBI:15378"/>
        <dbReference type="ChEBI" id="CHEBI:58141"/>
        <dbReference type="ChEBI" id="CHEBI:456216"/>
        <dbReference type="EC" id="3.6.1.41"/>
    </reaction>
</comment>
<comment type="subunit">
    <text evidence="4">Homodimer.</text>
</comment>
<comment type="similarity">
    <text evidence="3">Belongs to the Ap4A hydrolase YqeK family.</text>
</comment>
<proteinExistence type="evidence at protein level"/>
<keyword id="KW-0002">3D-structure</keyword>
<keyword id="KW-0378">Hydrolase</keyword>
<keyword id="KW-0408">Iron</keyword>
<keyword id="KW-0479">Metal-binding</keyword>
<keyword id="KW-0547">Nucleotide-binding</keyword>
<keyword id="KW-1185">Reference proteome</keyword>
<name>AP4AH_HALH5</name>
<accession>Q9KD90</accession>
<gene>
    <name evidence="5" type="ordered locus">BH1327</name>
</gene>